<proteinExistence type="evidence at protein level"/>
<dbReference type="EC" id="2.7.11.1"/>
<dbReference type="EMBL" id="AE014298">
    <property type="protein sequence ID" value="ACZ95258.1"/>
    <property type="molecule type" value="Genomic_DNA"/>
</dbReference>
<dbReference type="EMBL" id="AE014298">
    <property type="protein sequence ID" value="ACZ95259.1"/>
    <property type="molecule type" value="Genomic_DNA"/>
</dbReference>
<dbReference type="EMBL" id="BT003530">
    <property type="protein sequence ID" value="AAO39534.1"/>
    <property type="molecule type" value="mRNA"/>
</dbReference>
<dbReference type="RefSeq" id="NP_001162723.1">
    <property type="nucleotide sequence ID" value="NM_001169252.2"/>
</dbReference>
<dbReference type="RefSeq" id="NP_001162724.1">
    <property type="nucleotide sequence ID" value="NM_001169253.2"/>
</dbReference>
<dbReference type="RefSeq" id="NP_996411.2">
    <property type="nucleotide sequence ID" value="NM_206688.2"/>
</dbReference>
<dbReference type="SMR" id="Q0KHT7"/>
<dbReference type="BioGRID" id="58507">
    <property type="interactions" value="6"/>
</dbReference>
<dbReference type="FunCoup" id="Q0KHT7">
    <property type="interactions" value="323"/>
</dbReference>
<dbReference type="STRING" id="7227.FBpp0290243"/>
<dbReference type="iPTMnet" id="Q0KHT7"/>
<dbReference type="PaxDb" id="7227-FBpp0073356"/>
<dbReference type="DNASU" id="32097"/>
<dbReference type="EnsemblMetazoa" id="FBtr0301020">
    <property type="protein sequence ID" value="FBpp0290242"/>
    <property type="gene ID" value="FBgn0052666"/>
</dbReference>
<dbReference type="EnsemblMetazoa" id="FBtr0301021">
    <property type="protein sequence ID" value="FBpp0290243"/>
    <property type="gene ID" value="FBgn0052666"/>
</dbReference>
<dbReference type="EnsemblMetazoa" id="FBtr0340295">
    <property type="protein sequence ID" value="FBpp0309256"/>
    <property type="gene ID" value="FBgn0052666"/>
</dbReference>
<dbReference type="GeneID" id="32097"/>
<dbReference type="KEGG" id="dme:Dmel_CG32666"/>
<dbReference type="UCSC" id="CG32666-RA">
    <property type="organism name" value="d. melanogaster"/>
</dbReference>
<dbReference type="UCSC" id="CG32666-RB">
    <property type="organism name" value="d. melanogaster"/>
</dbReference>
<dbReference type="AGR" id="FB:FBgn0052666"/>
<dbReference type="CTD" id="32097"/>
<dbReference type="FlyBase" id="FBgn0052666">
    <property type="gene designation" value="Drak"/>
</dbReference>
<dbReference type="VEuPathDB" id="VectorBase:FBgn0052666"/>
<dbReference type="eggNOG" id="KOG0032">
    <property type="taxonomic scope" value="Eukaryota"/>
</dbReference>
<dbReference type="GeneTree" id="ENSGT00940000154014"/>
<dbReference type="HOGENOM" id="CLU_023542_0_0_1"/>
<dbReference type="InParanoid" id="Q0KHT7"/>
<dbReference type="OMA" id="HVWLKDD"/>
<dbReference type="OrthoDB" id="74764at2759"/>
<dbReference type="BioGRID-ORCS" id="32097">
    <property type="hits" value="0 hits in 3 CRISPR screens"/>
</dbReference>
<dbReference type="ChiTaRS" id="Drak">
    <property type="organism name" value="fly"/>
</dbReference>
<dbReference type="GenomeRNAi" id="32097"/>
<dbReference type="PRO" id="PR:Q0KHT7"/>
<dbReference type="Proteomes" id="UP000000803">
    <property type="component" value="Chromosome X"/>
</dbReference>
<dbReference type="Bgee" id="FBgn0052666">
    <property type="expression patterns" value="Expressed in dorsal appendage forming follicle cell in ovary and 264 other cell types or tissues"/>
</dbReference>
<dbReference type="GO" id="GO:0005634">
    <property type="term" value="C:nucleus"/>
    <property type="evidence" value="ECO:0000318"/>
    <property type="project" value="GO_Central"/>
</dbReference>
<dbReference type="GO" id="GO:0005524">
    <property type="term" value="F:ATP binding"/>
    <property type="evidence" value="ECO:0007669"/>
    <property type="project" value="UniProtKB-KW"/>
</dbReference>
<dbReference type="GO" id="GO:0106310">
    <property type="term" value="F:protein serine kinase activity"/>
    <property type="evidence" value="ECO:0007669"/>
    <property type="project" value="RHEA"/>
</dbReference>
<dbReference type="GO" id="GO:0004674">
    <property type="term" value="F:protein serine/threonine kinase activity"/>
    <property type="evidence" value="ECO:0000318"/>
    <property type="project" value="GO_Central"/>
</dbReference>
<dbReference type="GO" id="GO:0007480">
    <property type="term" value="P:imaginal disc-derived leg morphogenesis"/>
    <property type="evidence" value="ECO:0000315"/>
    <property type="project" value="FlyBase"/>
</dbReference>
<dbReference type="GO" id="GO:0007476">
    <property type="term" value="P:imaginal disc-derived wing morphogenesis"/>
    <property type="evidence" value="ECO:0000315"/>
    <property type="project" value="FlyBase"/>
</dbReference>
<dbReference type="GO" id="GO:0035556">
    <property type="term" value="P:intracellular signal transduction"/>
    <property type="evidence" value="ECO:0000318"/>
    <property type="project" value="GO_Central"/>
</dbReference>
<dbReference type="GO" id="GO:0002009">
    <property type="term" value="P:morphogenesis of an epithelium"/>
    <property type="evidence" value="ECO:0000316"/>
    <property type="project" value="FlyBase"/>
</dbReference>
<dbReference type="GO" id="GO:0043065">
    <property type="term" value="P:positive regulation of apoptotic process"/>
    <property type="evidence" value="ECO:0000318"/>
    <property type="project" value="GO_Central"/>
</dbReference>
<dbReference type="CDD" id="cd14106">
    <property type="entry name" value="STKc_DRAK"/>
    <property type="match status" value="1"/>
</dbReference>
<dbReference type="FunFam" id="3.30.200.20:FF:000175">
    <property type="entry name" value="Serine/threonine-protein kinase 17B"/>
    <property type="match status" value="1"/>
</dbReference>
<dbReference type="FunFam" id="1.10.510.10:FF:001311">
    <property type="entry name" value="Uncharacterized protein, isoform A"/>
    <property type="match status" value="1"/>
</dbReference>
<dbReference type="Gene3D" id="3.30.200.20">
    <property type="entry name" value="Phosphorylase Kinase, domain 1"/>
    <property type="match status" value="1"/>
</dbReference>
<dbReference type="Gene3D" id="1.10.510.10">
    <property type="entry name" value="Transferase(Phosphotransferase) domain 1"/>
    <property type="match status" value="1"/>
</dbReference>
<dbReference type="InterPro" id="IPR011009">
    <property type="entry name" value="Kinase-like_dom_sf"/>
</dbReference>
<dbReference type="InterPro" id="IPR000719">
    <property type="entry name" value="Prot_kinase_dom"/>
</dbReference>
<dbReference type="InterPro" id="IPR008271">
    <property type="entry name" value="Ser/Thr_kinase_AS"/>
</dbReference>
<dbReference type="PANTHER" id="PTHR24342:SF12">
    <property type="entry name" value="DEATH-ASSOCIATED PROTEIN KINASE RELATED"/>
    <property type="match status" value="1"/>
</dbReference>
<dbReference type="PANTHER" id="PTHR24342">
    <property type="entry name" value="SERINE/THREONINE-PROTEIN KINASE 17"/>
    <property type="match status" value="1"/>
</dbReference>
<dbReference type="Pfam" id="PF00069">
    <property type="entry name" value="Pkinase"/>
    <property type="match status" value="1"/>
</dbReference>
<dbReference type="SMART" id="SM00220">
    <property type="entry name" value="S_TKc"/>
    <property type="match status" value="1"/>
</dbReference>
<dbReference type="SUPFAM" id="SSF56112">
    <property type="entry name" value="Protein kinase-like (PK-like)"/>
    <property type="match status" value="1"/>
</dbReference>
<dbReference type="PROSITE" id="PS50011">
    <property type="entry name" value="PROTEIN_KINASE_DOM"/>
    <property type="match status" value="1"/>
</dbReference>
<dbReference type="PROSITE" id="PS00108">
    <property type="entry name" value="PROTEIN_KINASE_ST"/>
    <property type="match status" value="1"/>
</dbReference>
<accession>Q0KHT7</accession>
<accession>E1JJH9</accession>
<accession>Q86P19</accession>
<comment type="catalytic activity">
    <reaction>
        <text>L-seryl-[protein] + ATP = O-phospho-L-seryl-[protein] + ADP + H(+)</text>
        <dbReference type="Rhea" id="RHEA:17989"/>
        <dbReference type="Rhea" id="RHEA-COMP:9863"/>
        <dbReference type="Rhea" id="RHEA-COMP:11604"/>
        <dbReference type="ChEBI" id="CHEBI:15378"/>
        <dbReference type="ChEBI" id="CHEBI:29999"/>
        <dbReference type="ChEBI" id="CHEBI:30616"/>
        <dbReference type="ChEBI" id="CHEBI:83421"/>
        <dbReference type="ChEBI" id="CHEBI:456216"/>
        <dbReference type="EC" id="2.7.11.1"/>
    </reaction>
</comment>
<comment type="catalytic activity">
    <reaction>
        <text>L-threonyl-[protein] + ATP = O-phospho-L-threonyl-[protein] + ADP + H(+)</text>
        <dbReference type="Rhea" id="RHEA:46608"/>
        <dbReference type="Rhea" id="RHEA-COMP:11060"/>
        <dbReference type="Rhea" id="RHEA-COMP:11605"/>
        <dbReference type="ChEBI" id="CHEBI:15378"/>
        <dbReference type="ChEBI" id="CHEBI:30013"/>
        <dbReference type="ChEBI" id="CHEBI:30616"/>
        <dbReference type="ChEBI" id="CHEBI:61977"/>
        <dbReference type="ChEBI" id="CHEBI:456216"/>
        <dbReference type="EC" id="2.7.11.1"/>
    </reaction>
</comment>
<comment type="similarity">
    <text evidence="1">Belongs to the protein kinase superfamily. Ser/Thr protein kinase family.</text>
</comment>
<feature type="chain" id="PRO_0000355636" description="Death-associated protein kinase related">
    <location>
        <begin position="1"/>
        <end position="674"/>
    </location>
</feature>
<feature type="domain" description="Protein kinase" evidence="1">
    <location>
        <begin position="37"/>
        <end position="295"/>
    </location>
</feature>
<feature type="region of interest" description="Disordered" evidence="3">
    <location>
        <begin position="308"/>
        <end position="388"/>
    </location>
</feature>
<feature type="region of interest" description="Disordered" evidence="3">
    <location>
        <begin position="412"/>
        <end position="440"/>
    </location>
</feature>
<feature type="region of interest" description="Disordered" evidence="3">
    <location>
        <begin position="511"/>
        <end position="583"/>
    </location>
</feature>
<feature type="region of interest" description="Disordered" evidence="3">
    <location>
        <begin position="614"/>
        <end position="650"/>
    </location>
</feature>
<feature type="compositionally biased region" description="Acidic residues" evidence="3">
    <location>
        <begin position="312"/>
        <end position="343"/>
    </location>
</feature>
<feature type="compositionally biased region" description="Low complexity" evidence="3">
    <location>
        <begin position="352"/>
        <end position="363"/>
    </location>
</feature>
<feature type="compositionally biased region" description="Basic residues" evidence="3">
    <location>
        <begin position="373"/>
        <end position="382"/>
    </location>
</feature>
<feature type="compositionally biased region" description="Low complexity" evidence="3">
    <location>
        <begin position="512"/>
        <end position="525"/>
    </location>
</feature>
<feature type="compositionally biased region" description="Polar residues" evidence="3">
    <location>
        <begin position="526"/>
        <end position="541"/>
    </location>
</feature>
<feature type="compositionally biased region" description="Polar residues" evidence="3">
    <location>
        <begin position="555"/>
        <end position="564"/>
    </location>
</feature>
<feature type="compositionally biased region" description="Low complexity" evidence="3">
    <location>
        <begin position="565"/>
        <end position="583"/>
    </location>
</feature>
<feature type="compositionally biased region" description="Low complexity" evidence="3">
    <location>
        <begin position="614"/>
        <end position="631"/>
    </location>
</feature>
<feature type="compositionally biased region" description="Basic residues" evidence="3">
    <location>
        <begin position="632"/>
        <end position="650"/>
    </location>
</feature>
<feature type="active site" description="Proton acceptor" evidence="1 2">
    <location>
        <position position="160"/>
    </location>
</feature>
<feature type="binding site" evidence="1">
    <location>
        <begin position="43"/>
        <end position="51"/>
    </location>
    <ligand>
        <name>ATP</name>
        <dbReference type="ChEBI" id="CHEBI:30616"/>
    </ligand>
</feature>
<feature type="binding site" evidence="1">
    <location>
        <position position="66"/>
    </location>
    <ligand>
        <name>ATP</name>
        <dbReference type="ChEBI" id="CHEBI:30616"/>
    </ligand>
</feature>
<feature type="modified residue" description="Phosphoserine" evidence="4">
    <location>
        <position position="384"/>
    </location>
</feature>
<feature type="modified residue" description="Phosphoserine" evidence="4">
    <location>
        <position position="387"/>
    </location>
</feature>
<feature type="modified residue" description="Phosphoserine" evidence="4">
    <location>
        <position position="435"/>
    </location>
</feature>
<feature type="modified residue" description="Phosphoserine" evidence="4">
    <location>
        <position position="437"/>
    </location>
</feature>
<feature type="modified residue" description="Phosphoserine" evidence="4">
    <location>
        <position position="521"/>
    </location>
</feature>
<gene>
    <name type="primary">Drak</name>
    <name type="ORF">CG32666</name>
</gene>
<evidence type="ECO:0000255" key="1">
    <source>
        <dbReference type="PROSITE-ProRule" id="PRU00159"/>
    </source>
</evidence>
<evidence type="ECO:0000255" key="2">
    <source>
        <dbReference type="PROSITE-ProRule" id="PRU10027"/>
    </source>
</evidence>
<evidence type="ECO:0000256" key="3">
    <source>
        <dbReference type="SAM" id="MobiDB-lite"/>
    </source>
</evidence>
<evidence type="ECO:0000269" key="4">
    <source>
    </source>
</evidence>
<reference key="1">
    <citation type="journal article" date="2000" name="Science">
        <title>The genome sequence of Drosophila melanogaster.</title>
        <authorList>
            <person name="Adams M.D."/>
            <person name="Celniker S.E."/>
            <person name="Holt R.A."/>
            <person name="Evans C.A."/>
            <person name="Gocayne J.D."/>
            <person name="Amanatides P.G."/>
            <person name="Scherer S.E."/>
            <person name="Li P.W."/>
            <person name="Hoskins R.A."/>
            <person name="Galle R.F."/>
            <person name="George R.A."/>
            <person name="Lewis S.E."/>
            <person name="Richards S."/>
            <person name="Ashburner M."/>
            <person name="Henderson S.N."/>
            <person name="Sutton G.G."/>
            <person name="Wortman J.R."/>
            <person name="Yandell M.D."/>
            <person name="Zhang Q."/>
            <person name="Chen L.X."/>
            <person name="Brandon R.C."/>
            <person name="Rogers Y.-H.C."/>
            <person name="Blazej R.G."/>
            <person name="Champe M."/>
            <person name="Pfeiffer B.D."/>
            <person name="Wan K.H."/>
            <person name="Doyle C."/>
            <person name="Baxter E.G."/>
            <person name="Helt G."/>
            <person name="Nelson C.R."/>
            <person name="Miklos G.L.G."/>
            <person name="Abril J.F."/>
            <person name="Agbayani A."/>
            <person name="An H.-J."/>
            <person name="Andrews-Pfannkoch C."/>
            <person name="Baldwin D."/>
            <person name="Ballew R.M."/>
            <person name="Basu A."/>
            <person name="Baxendale J."/>
            <person name="Bayraktaroglu L."/>
            <person name="Beasley E.M."/>
            <person name="Beeson K.Y."/>
            <person name="Benos P.V."/>
            <person name="Berman B.P."/>
            <person name="Bhandari D."/>
            <person name="Bolshakov S."/>
            <person name="Borkova D."/>
            <person name="Botchan M.R."/>
            <person name="Bouck J."/>
            <person name="Brokstein P."/>
            <person name="Brottier P."/>
            <person name="Burtis K.C."/>
            <person name="Busam D.A."/>
            <person name="Butler H."/>
            <person name="Cadieu E."/>
            <person name="Center A."/>
            <person name="Chandra I."/>
            <person name="Cherry J.M."/>
            <person name="Cawley S."/>
            <person name="Dahlke C."/>
            <person name="Davenport L.B."/>
            <person name="Davies P."/>
            <person name="de Pablos B."/>
            <person name="Delcher A."/>
            <person name="Deng Z."/>
            <person name="Mays A.D."/>
            <person name="Dew I."/>
            <person name="Dietz S.M."/>
            <person name="Dodson K."/>
            <person name="Doup L.E."/>
            <person name="Downes M."/>
            <person name="Dugan-Rocha S."/>
            <person name="Dunkov B.C."/>
            <person name="Dunn P."/>
            <person name="Durbin K.J."/>
            <person name="Evangelista C.C."/>
            <person name="Ferraz C."/>
            <person name="Ferriera S."/>
            <person name="Fleischmann W."/>
            <person name="Fosler C."/>
            <person name="Gabrielian A.E."/>
            <person name="Garg N.S."/>
            <person name="Gelbart W.M."/>
            <person name="Glasser K."/>
            <person name="Glodek A."/>
            <person name="Gong F."/>
            <person name="Gorrell J.H."/>
            <person name="Gu Z."/>
            <person name="Guan P."/>
            <person name="Harris M."/>
            <person name="Harris N.L."/>
            <person name="Harvey D.A."/>
            <person name="Heiman T.J."/>
            <person name="Hernandez J.R."/>
            <person name="Houck J."/>
            <person name="Hostin D."/>
            <person name="Houston K.A."/>
            <person name="Howland T.J."/>
            <person name="Wei M.-H."/>
            <person name="Ibegwam C."/>
            <person name="Jalali M."/>
            <person name="Kalush F."/>
            <person name="Karpen G.H."/>
            <person name="Ke Z."/>
            <person name="Kennison J.A."/>
            <person name="Ketchum K.A."/>
            <person name="Kimmel B.E."/>
            <person name="Kodira C.D."/>
            <person name="Kraft C.L."/>
            <person name="Kravitz S."/>
            <person name="Kulp D."/>
            <person name="Lai Z."/>
            <person name="Lasko P."/>
            <person name="Lei Y."/>
            <person name="Levitsky A.A."/>
            <person name="Li J.H."/>
            <person name="Li Z."/>
            <person name="Liang Y."/>
            <person name="Lin X."/>
            <person name="Liu X."/>
            <person name="Mattei B."/>
            <person name="McIntosh T.C."/>
            <person name="McLeod M.P."/>
            <person name="McPherson D."/>
            <person name="Merkulov G."/>
            <person name="Milshina N.V."/>
            <person name="Mobarry C."/>
            <person name="Morris J."/>
            <person name="Moshrefi A."/>
            <person name="Mount S.M."/>
            <person name="Moy M."/>
            <person name="Murphy B."/>
            <person name="Murphy L."/>
            <person name="Muzny D.M."/>
            <person name="Nelson D.L."/>
            <person name="Nelson D.R."/>
            <person name="Nelson K.A."/>
            <person name="Nixon K."/>
            <person name="Nusskern D.R."/>
            <person name="Pacleb J.M."/>
            <person name="Palazzolo M."/>
            <person name="Pittman G.S."/>
            <person name="Pan S."/>
            <person name="Pollard J."/>
            <person name="Puri V."/>
            <person name="Reese M.G."/>
            <person name="Reinert K."/>
            <person name="Remington K."/>
            <person name="Saunders R.D.C."/>
            <person name="Scheeler F."/>
            <person name="Shen H."/>
            <person name="Shue B.C."/>
            <person name="Siden-Kiamos I."/>
            <person name="Simpson M."/>
            <person name="Skupski M.P."/>
            <person name="Smith T.J."/>
            <person name="Spier E."/>
            <person name="Spradling A.C."/>
            <person name="Stapleton M."/>
            <person name="Strong R."/>
            <person name="Sun E."/>
            <person name="Svirskas R."/>
            <person name="Tector C."/>
            <person name="Turner R."/>
            <person name="Venter E."/>
            <person name="Wang A.H."/>
            <person name="Wang X."/>
            <person name="Wang Z.-Y."/>
            <person name="Wassarman D.A."/>
            <person name="Weinstock G.M."/>
            <person name="Weissenbach J."/>
            <person name="Williams S.M."/>
            <person name="Woodage T."/>
            <person name="Worley K.C."/>
            <person name="Wu D."/>
            <person name="Yang S."/>
            <person name="Yao Q.A."/>
            <person name="Ye J."/>
            <person name="Yeh R.-F."/>
            <person name="Zaveri J.S."/>
            <person name="Zhan M."/>
            <person name="Zhang G."/>
            <person name="Zhao Q."/>
            <person name="Zheng L."/>
            <person name="Zheng X.H."/>
            <person name="Zhong F.N."/>
            <person name="Zhong W."/>
            <person name="Zhou X."/>
            <person name="Zhu S.C."/>
            <person name="Zhu X."/>
            <person name="Smith H.O."/>
            <person name="Gibbs R.A."/>
            <person name="Myers E.W."/>
            <person name="Rubin G.M."/>
            <person name="Venter J.C."/>
        </authorList>
    </citation>
    <scope>NUCLEOTIDE SEQUENCE [LARGE SCALE GENOMIC DNA]</scope>
    <source>
        <strain>Berkeley</strain>
    </source>
</reference>
<reference key="2">
    <citation type="journal article" date="2002" name="Genome Biol.">
        <title>Annotation of the Drosophila melanogaster euchromatic genome: a systematic review.</title>
        <authorList>
            <person name="Misra S."/>
            <person name="Crosby M.A."/>
            <person name="Mungall C.J."/>
            <person name="Matthews B.B."/>
            <person name="Campbell K.S."/>
            <person name="Hradecky P."/>
            <person name="Huang Y."/>
            <person name="Kaminker J.S."/>
            <person name="Millburn G.H."/>
            <person name="Prochnik S.E."/>
            <person name="Smith C.D."/>
            <person name="Tupy J.L."/>
            <person name="Whitfield E.J."/>
            <person name="Bayraktaroglu L."/>
            <person name="Berman B.P."/>
            <person name="Bettencourt B.R."/>
            <person name="Celniker S.E."/>
            <person name="de Grey A.D.N.J."/>
            <person name="Drysdale R.A."/>
            <person name="Harris N.L."/>
            <person name="Richter J."/>
            <person name="Russo S."/>
            <person name="Schroeder A.J."/>
            <person name="Shu S.Q."/>
            <person name="Stapleton M."/>
            <person name="Yamada C."/>
            <person name="Ashburner M."/>
            <person name="Gelbart W.M."/>
            <person name="Rubin G.M."/>
            <person name="Lewis S.E."/>
        </authorList>
    </citation>
    <scope>GENOME REANNOTATION</scope>
    <source>
        <strain>Berkeley</strain>
    </source>
</reference>
<reference key="3">
    <citation type="submission" date="2003-02" db="EMBL/GenBank/DDBJ databases">
        <authorList>
            <person name="Stapleton M."/>
            <person name="Brokstein P."/>
            <person name="Hong L."/>
            <person name="Agbayani A."/>
            <person name="Carlson J.W."/>
            <person name="Champe M."/>
            <person name="Chavez C."/>
            <person name="Dorsett V."/>
            <person name="Dresnek D."/>
            <person name="Farfan D."/>
            <person name="Frise E."/>
            <person name="George R.A."/>
            <person name="Gonzalez M."/>
            <person name="Guarin H."/>
            <person name="Kronmiller B."/>
            <person name="Li P.W."/>
            <person name="Liao G."/>
            <person name="Miranda A."/>
            <person name="Mungall C.J."/>
            <person name="Nunoo J."/>
            <person name="Pacleb J.M."/>
            <person name="Paragas V."/>
            <person name="Park S."/>
            <person name="Patel S."/>
            <person name="Phouanenavong S."/>
            <person name="Wan K.H."/>
            <person name="Yu C."/>
            <person name="Lewis S.E."/>
            <person name="Rubin G.M."/>
            <person name="Celniker S.E."/>
        </authorList>
    </citation>
    <scope>NUCLEOTIDE SEQUENCE [LARGE SCALE MRNA]</scope>
    <source>
        <strain>Berkeley</strain>
        <tissue>Embryo</tissue>
    </source>
</reference>
<reference key="4">
    <citation type="journal article" date="2008" name="J. Proteome Res.">
        <title>Phosphoproteome analysis of Drosophila melanogaster embryos.</title>
        <authorList>
            <person name="Zhai B."/>
            <person name="Villen J."/>
            <person name="Beausoleil S.A."/>
            <person name="Mintseris J."/>
            <person name="Gygi S.P."/>
        </authorList>
    </citation>
    <scope>PHOSPHORYLATION [LARGE SCALE ANALYSIS] AT SER-384; SER-387; SER-435; SER-437 AND SER-521</scope>
    <scope>IDENTIFICATION BY MASS SPECTROMETRY</scope>
    <source>
        <tissue>Embryo</tissue>
    </source>
</reference>
<sequence>MFTEKGIFPIGDGLLDVDADRLKGLLVSCPDINEIYEVEQTPFARGKFAAVRRAIHKNTGSHFAAKFLKRRRRAQSSDKEIKHEIAVLMLCEGEDNIVNLNAVHETRSDTALLLELATGGELQTILDNEECLTEAQARHCMREVLKALKFLHDRSIAHLDLKPQNILLAGERIEDGLKLCDFGISRVVCEGINVREMAGTPDYVAPEVLQYEPLSLLTDIWSVGVLTYVLLSGFSPFGGDTKQETFLNISQCALTFPDNLFGGVSPVAIDFIRRALRIKPNDRMNATGCLDHIWLKDDCSLDRQIYLQPQSDAEEEEEEDVDDDVEDEEEEEQVEEEEEETQNVEEPTTEAPQQQQQPVQQHQLAKSGQIHSKPTHNGHHRANSGGSISKIPIATSKLQSTPSSETTTAIHTLTSNSNGHVHKPTQIVTPTRRASDSDKENTYTATFVKKPVATIQLGSSNGIEDATVVATLTLFPDAPTTPKVIRKTPTGESNGSATSVKALVKKFQLEDSSGSAVARRSGGAVTSSSGLHSPTTTSVRLNSIRRASEPLTTVYKKQTSQNGCSSTSNPSSSPGSSPTTSGSTATLLIHSQRLGNSTAPASHCVAVPATATATSSASSSNSSSGKSTSAAHHLHHHHMHHHHHHHHHHVVIAAKNAAAVAATNNLSLDQGIIC</sequence>
<protein>
    <recommendedName>
        <fullName>Death-associated protein kinase related</fullName>
        <ecNumber>2.7.11.1</ecNumber>
    </recommendedName>
</protein>
<name>DAPKR_DROME</name>
<organism>
    <name type="scientific">Drosophila melanogaster</name>
    <name type="common">Fruit fly</name>
    <dbReference type="NCBI Taxonomy" id="7227"/>
    <lineage>
        <taxon>Eukaryota</taxon>
        <taxon>Metazoa</taxon>
        <taxon>Ecdysozoa</taxon>
        <taxon>Arthropoda</taxon>
        <taxon>Hexapoda</taxon>
        <taxon>Insecta</taxon>
        <taxon>Pterygota</taxon>
        <taxon>Neoptera</taxon>
        <taxon>Endopterygota</taxon>
        <taxon>Diptera</taxon>
        <taxon>Brachycera</taxon>
        <taxon>Muscomorpha</taxon>
        <taxon>Ephydroidea</taxon>
        <taxon>Drosophilidae</taxon>
        <taxon>Drosophila</taxon>
        <taxon>Sophophora</taxon>
    </lineage>
</organism>
<keyword id="KW-0067">ATP-binding</keyword>
<keyword id="KW-0418">Kinase</keyword>
<keyword id="KW-0547">Nucleotide-binding</keyword>
<keyword id="KW-0597">Phosphoprotein</keyword>
<keyword id="KW-1185">Reference proteome</keyword>
<keyword id="KW-0723">Serine/threonine-protein kinase</keyword>
<keyword id="KW-0808">Transferase</keyword>